<keyword id="KW-0131">Cell cycle</keyword>
<keyword id="KW-0132">Cell division</keyword>
<keyword id="KW-0997">Cell inner membrane</keyword>
<keyword id="KW-1003">Cell membrane</keyword>
<keyword id="KW-0133">Cell shape</keyword>
<keyword id="KW-0961">Cell wall biogenesis/degradation</keyword>
<keyword id="KW-0328">Glycosyltransferase</keyword>
<keyword id="KW-0472">Membrane</keyword>
<keyword id="KW-0573">Peptidoglycan synthesis</keyword>
<keyword id="KW-0808">Transferase</keyword>
<dbReference type="EC" id="2.4.1.227" evidence="1"/>
<dbReference type="EMBL" id="CP000720">
    <property type="protein sequence ID" value="ABS49440.1"/>
    <property type="molecule type" value="Genomic_DNA"/>
</dbReference>
<dbReference type="RefSeq" id="WP_011191735.1">
    <property type="nucleotide sequence ID" value="NC_009708.1"/>
</dbReference>
<dbReference type="SMR" id="A7FM66"/>
<dbReference type="CAZy" id="GT28">
    <property type="family name" value="Glycosyltransferase Family 28"/>
</dbReference>
<dbReference type="GeneID" id="49787307"/>
<dbReference type="KEGG" id="ypi:YpsIP31758_3387"/>
<dbReference type="HOGENOM" id="CLU_037404_2_0_6"/>
<dbReference type="UniPathway" id="UPA00219"/>
<dbReference type="Proteomes" id="UP000002412">
    <property type="component" value="Chromosome"/>
</dbReference>
<dbReference type="GO" id="GO:0005886">
    <property type="term" value="C:plasma membrane"/>
    <property type="evidence" value="ECO:0007669"/>
    <property type="project" value="UniProtKB-SubCell"/>
</dbReference>
<dbReference type="GO" id="GO:0051991">
    <property type="term" value="F:UDP-N-acetyl-D-glucosamine:N-acetylmuramoyl-L-alanyl-D-glutamyl-meso-2,6-diaminopimelyl-D-alanyl-D-alanine-diphosphoundecaprenol 4-beta-N-acetylglucosaminlytransferase activity"/>
    <property type="evidence" value="ECO:0007669"/>
    <property type="project" value="RHEA"/>
</dbReference>
<dbReference type="GO" id="GO:0050511">
    <property type="term" value="F:undecaprenyldiphospho-muramoylpentapeptide beta-N-acetylglucosaminyltransferase activity"/>
    <property type="evidence" value="ECO:0007669"/>
    <property type="project" value="UniProtKB-UniRule"/>
</dbReference>
<dbReference type="GO" id="GO:0005975">
    <property type="term" value="P:carbohydrate metabolic process"/>
    <property type="evidence" value="ECO:0007669"/>
    <property type="project" value="InterPro"/>
</dbReference>
<dbReference type="GO" id="GO:0051301">
    <property type="term" value="P:cell division"/>
    <property type="evidence" value="ECO:0007669"/>
    <property type="project" value="UniProtKB-KW"/>
</dbReference>
<dbReference type="GO" id="GO:0071555">
    <property type="term" value="P:cell wall organization"/>
    <property type="evidence" value="ECO:0007669"/>
    <property type="project" value="UniProtKB-KW"/>
</dbReference>
<dbReference type="GO" id="GO:0030259">
    <property type="term" value="P:lipid glycosylation"/>
    <property type="evidence" value="ECO:0007669"/>
    <property type="project" value="UniProtKB-UniRule"/>
</dbReference>
<dbReference type="GO" id="GO:0009252">
    <property type="term" value="P:peptidoglycan biosynthetic process"/>
    <property type="evidence" value="ECO:0007669"/>
    <property type="project" value="UniProtKB-UniRule"/>
</dbReference>
<dbReference type="GO" id="GO:0008360">
    <property type="term" value="P:regulation of cell shape"/>
    <property type="evidence" value="ECO:0007669"/>
    <property type="project" value="UniProtKB-KW"/>
</dbReference>
<dbReference type="CDD" id="cd03785">
    <property type="entry name" value="GT28_MurG"/>
    <property type="match status" value="1"/>
</dbReference>
<dbReference type="FunFam" id="3.40.50.2000:FF:000016">
    <property type="entry name" value="UDP-N-acetylglucosamine--N-acetylmuramyl-(pentapeptide) pyrophosphoryl-undecaprenol N-acetylglucosamine transferase"/>
    <property type="match status" value="1"/>
</dbReference>
<dbReference type="FunFam" id="3.40.50.2000:FF:000018">
    <property type="entry name" value="UDP-N-acetylglucosamine--N-acetylmuramyl-(pentapeptide) pyrophosphoryl-undecaprenol N-acetylglucosamine transferase"/>
    <property type="match status" value="1"/>
</dbReference>
<dbReference type="Gene3D" id="3.40.50.2000">
    <property type="entry name" value="Glycogen Phosphorylase B"/>
    <property type="match status" value="2"/>
</dbReference>
<dbReference type="HAMAP" id="MF_00033">
    <property type="entry name" value="MurG"/>
    <property type="match status" value="1"/>
</dbReference>
<dbReference type="InterPro" id="IPR006009">
    <property type="entry name" value="GlcNAc_MurG"/>
</dbReference>
<dbReference type="InterPro" id="IPR007235">
    <property type="entry name" value="Glyco_trans_28_C"/>
</dbReference>
<dbReference type="InterPro" id="IPR004276">
    <property type="entry name" value="GlycoTrans_28_N"/>
</dbReference>
<dbReference type="NCBIfam" id="TIGR01133">
    <property type="entry name" value="murG"/>
    <property type="match status" value="1"/>
</dbReference>
<dbReference type="PANTHER" id="PTHR21015:SF22">
    <property type="entry name" value="GLYCOSYLTRANSFERASE"/>
    <property type="match status" value="1"/>
</dbReference>
<dbReference type="PANTHER" id="PTHR21015">
    <property type="entry name" value="UDP-N-ACETYLGLUCOSAMINE--N-ACETYLMURAMYL-(PENTAPEPTIDE) PYROPHOSPHORYL-UNDECAPRENOL N-ACETYLGLUCOSAMINE TRANSFERASE 1"/>
    <property type="match status" value="1"/>
</dbReference>
<dbReference type="Pfam" id="PF04101">
    <property type="entry name" value="Glyco_tran_28_C"/>
    <property type="match status" value="1"/>
</dbReference>
<dbReference type="Pfam" id="PF03033">
    <property type="entry name" value="Glyco_transf_28"/>
    <property type="match status" value="1"/>
</dbReference>
<dbReference type="SUPFAM" id="SSF53756">
    <property type="entry name" value="UDP-Glycosyltransferase/glycogen phosphorylase"/>
    <property type="match status" value="1"/>
</dbReference>
<proteinExistence type="inferred from homology"/>
<reference key="1">
    <citation type="journal article" date="2007" name="PLoS Genet.">
        <title>The complete genome sequence of Yersinia pseudotuberculosis IP31758, the causative agent of Far East scarlet-like fever.</title>
        <authorList>
            <person name="Eppinger M."/>
            <person name="Rosovitz M.J."/>
            <person name="Fricke W.F."/>
            <person name="Rasko D.A."/>
            <person name="Kokorina G."/>
            <person name="Fayolle C."/>
            <person name="Lindler L.E."/>
            <person name="Carniel E."/>
            <person name="Ravel J."/>
        </authorList>
    </citation>
    <scope>NUCLEOTIDE SEQUENCE [LARGE SCALE GENOMIC DNA]</scope>
    <source>
        <strain>IP 31758</strain>
    </source>
</reference>
<protein>
    <recommendedName>
        <fullName evidence="1">UDP-N-acetylglucosamine--N-acetylmuramyl-(pentapeptide) pyrophosphoryl-undecaprenol N-acetylglucosamine transferase</fullName>
        <ecNumber evidence="1">2.4.1.227</ecNumber>
    </recommendedName>
    <alternativeName>
        <fullName evidence="1">Undecaprenyl-PP-MurNAc-pentapeptide-UDPGlcNAc GlcNAc transferase</fullName>
    </alternativeName>
</protein>
<sequence>MSGKTKRLMVMAGGTGGHVFPGLAVAHHLMAQGWQVRWLGTADRMEASLVPQHGIEIDFIKISGLRGKGLMAQLTAPIRIYRAVRQAQKIMRDYQPDVVLGMGGYVSGPGGLAAWLCGVPVVLHEQNGIAGLTNRWLARIAKKVLQAFPGAFPNADVVGNPVRTDVLALPLPAVRLSGREGPIRVLVIGGSQGARILNQTLPLVAASLGEQITLWHQVGKGALPEVSQAYQQAGQAGHQVVEFIDDMAAAYAWADVVVCRSGALTVSEVAAAGLPAIFVPFQHKDRQQYWNALPLEKAGAAKIIEQPQFTATSVSSLLAGWDRATLLSMAERARSVAIPDATERVAAEVVAASKSA</sequence>
<feature type="chain" id="PRO_1000057259" description="UDP-N-acetylglucosamine--N-acetylmuramyl-(pentapeptide) pyrophosphoryl-undecaprenol N-acetylglucosamine transferase">
    <location>
        <begin position="1"/>
        <end position="356"/>
    </location>
</feature>
<feature type="binding site" evidence="1">
    <location>
        <begin position="15"/>
        <end position="17"/>
    </location>
    <ligand>
        <name>UDP-N-acetyl-alpha-D-glucosamine</name>
        <dbReference type="ChEBI" id="CHEBI:57705"/>
    </ligand>
</feature>
<feature type="binding site" evidence="1">
    <location>
        <position position="127"/>
    </location>
    <ligand>
        <name>UDP-N-acetyl-alpha-D-glucosamine</name>
        <dbReference type="ChEBI" id="CHEBI:57705"/>
    </ligand>
</feature>
<feature type="binding site" evidence="1">
    <location>
        <position position="163"/>
    </location>
    <ligand>
        <name>UDP-N-acetyl-alpha-D-glucosamine</name>
        <dbReference type="ChEBI" id="CHEBI:57705"/>
    </ligand>
</feature>
<feature type="binding site" evidence="1">
    <location>
        <position position="191"/>
    </location>
    <ligand>
        <name>UDP-N-acetyl-alpha-D-glucosamine</name>
        <dbReference type="ChEBI" id="CHEBI:57705"/>
    </ligand>
</feature>
<feature type="binding site" evidence="1">
    <location>
        <position position="244"/>
    </location>
    <ligand>
        <name>UDP-N-acetyl-alpha-D-glucosamine</name>
        <dbReference type="ChEBI" id="CHEBI:57705"/>
    </ligand>
</feature>
<feature type="binding site" evidence="1">
    <location>
        <begin position="263"/>
        <end position="268"/>
    </location>
    <ligand>
        <name>UDP-N-acetyl-alpha-D-glucosamine</name>
        <dbReference type="ChEBI" id="CHEBI:57705"/>
    </ligand>
</feature>
<feature type="binding site" evidence="1">
    <location>
        <position position="288"/>
    </location>
    <ligand>
        <name>UDP-N-acetyl-alpha-D-glucosamine</name>
        <dbReference type="ChEBI" id="CHEBI:57705"/>
    </ligand>
</feature>
<evidence type="ECO:0000255" key="1">
    <source>
        <dbReference type="HAMAP-Rule" id="MF_00033"/>
    </source>
</evidence>
<name>MURG_YERP3</name>
<comment type="function">
    <text evidence="1">Cell wall formation. Catalyzes the transfer of a GlcNAc subunit on undecaprenyl-pyrophosphoryl-MurNAc-pentapeptide (lipid intermediate I) to form undecaprenyl-pyrophosphoryl-MurNAc-(pentapeptide)GlcNAc (lipid intermediate II).</text>
</comment>
<comment type="catalytic activity">
    <reaction evidence="1">
        <text>di-trans,octa-cis-undecaprenyl diphospho-N-acetyl-alpha-D-muramoyl-L-alanyl-D-glutamyl-meso-2,6-diaminopimeloyl-D-alanyl-D-alanine + UDP-N-acetyl-alpha-D-glucosamine = di-trans,octa-cis-undecaprenyl diphospho-[N-acetyl-alpha-D-glucosaminyl-(1-&gt;4)]-N-acetyl-alpha-D-muramoyl-L-alanyl-D-glutamyl-meso-2,6-diaminopimeloyl-D-alanyl-D-alanine + UDP + H(+)</text>
        <dbReference type="Rhea" id="RHEA:31227"/>
        <dbReference type="ChEBI" id="CHEBI:15378"/>
        <dbReference type="ChEBI" id="CHEBI:57705"/>
        <dbReference type="ChEBI" id="CHEBI:58223"/>
        <dbReference type="ChEBI" id="CHEBI:61387"/>
        <dbReference type="ChEBI" id="CHEBI:61388"/>
        <dbReference type="EC" id="2.4.1.227"/>
    </reaction>
</comment>
<comment type="pathway">
    <text evidence="1">Cell wall biogenesis; peptidoglycan biosynthesis.</text>
</comment>
<comment type="subcellular location">
    <subcellularLocation>
        <location evidence="1">Cell inner membrane</location>
        <topology evidence="1">Peripheral membrane protein</topology>
        <orientation evidence="1">Cytoplasmic side</orientation>
    </subcellularLocation>
</comment>
<comment type="similarity">
    <text evidence="1">Belongs to the glycosyltransferase 28 family. MurG subfamily.</text>
</comment>
<organism>
    <name type="scientific">Yersinia pseudotuberculosis serotype O:1b (strain IP 31758)</name>
    <dbReference type="NCBI Taxonomy" id="349747"/>
    <lineage>
        <taxon>Bacteria</taxon>
        <taxon>Pseudomonadati</taxon>
        <taxon>Pseudomonadota</taxon>
        <taxon>Gammaproteobacteria</taxon>
        <taxon>Enterobacterales</taxon>
        <taxon>Yersiniaceae</taxon>
        <taxon>Yersinia</taxon>
    </lineage>
</organism>
<gene>
    <name evidence="1" type="primary">murG</name>
    <name type="ordered locus">YpsIP31758_3387</name>
</gene>
<accession>A7FM66</accession>